<gene>
    <name evidence="1" type="primary">recA</name>
    <name type="ordered locus">EHR_05555</name>
</gene>
<accession>Q6KCJ5</accession>
<accession>I6T9Y1</accession>
<proteinExistence type="inferred from homology"/>
<dbReference type="EMBL" id="AJ621708">
    <property type="protein sequence ID" value="CAF21833.1"/>
    <property type="molecule type" value="Genomic_DNA"/>
</dbReference>
<dbReference type="EMBL" id="CP003504">
    <property type="protein sequence ID" value="AFM70064.1"/>
    <property type="molecule type" value="Genomic_DNA"/>
</dbReference>
<dbReference type="RefSeq" id="WP_010720621.1">
    <property type="nucleotide sequence ID" value="NZ_KB946230.1"/>
</dbReference>
<dbReference type="SMR" id="Q6KCJ5"/>
<dbReference type="GeneID" id="56786399"/>
<dbReference type="KEGG" id="ehr:EHR_05555"/>
<dbReference type="eggNOG" id="COG0468">
    <property type="taxonomic scope" value="Bacteria"/>
</dbReference>
<dbReference type="HOGENOM" id="CLU_040469_1_2_9"/>
<dbReference type="OrthoDB" id="9776733at2"/>
<dbReference type="Proteomes" id="UP000002895">
    <property type="component" value="Chromosome"/>
</dbReference>
<dbReference type="GO" id="GO:0005829">
    <property type="term" value="C:cytosol"/>
    <property type="evidence" value="ECO:0007669"/>
    <property type="project" value="TreeGrafter"/>
</dbReference>
<dbReference type="GO" id="GO:0005524">
    <property type="term" value="F:ATP binding"/>
    <property type="evidence" value="ECO:0007669"/>
    <property type="project" value="UniProtKB-UniRule"/>
</dbReference>
<dbReference type="GO" id="GO:0016887">
    <property type="term" value="F:ATP hydrolysis activity"/>
    <property type="evidence" value="ECO:0007669"/>
    <property type="project" value="InterPro"/>
</dbReference>
<dbReference type="GO" id="GO:0140664">
    <property type="term" value="F:ATP-dependent DNA damage sensor activity"/>
    <property type="evidence" value="ECO:0007669"/>
    <property type="project" value="InterPro"/>
</dbReference>
<dbReference type="GO" id="GO:0003684">
    <property type="term" value="F:damaged DNA binding"/>
    <property type="evidence" value="ECO:0007669"/>
    <property type="project" value="UniProtKB-UniRule"/>
</dbReference>
<dbReference type="GO" id="GO:0003697">
    <property type="term" value="F:single-stranded DNA binding"/>
    <property type="evidence" value="ECO:0007669"/>
    <property type="project" value="UniProtKB-UniRule"/>
</dbReference>
<dbReference type="GO" id="GO:0006310">
    <property type="term" value="P:DNA recombination"/>
    <property type="evidence" value="ECO:0007669"/>
    <property type="project" value="UniProtKB-UniRule"/>
</dbReference>
<dbReference type="GO" id="GO:0006281">
    <property type="term" value="P:DNA repair"/>
    <property type="evidence" value="ECO:0007669"/>
    <property type="project" value="UniProtKB-UniRule"/>
</dbReference>
<dbReference type="GO" id="GO:0009432">
    <property type="term" value="P:SOS response"/>
    <property type="evidence" value="ECO:0007669"/>
    <property type="project" value="UniProtKB-UniRule"/>
</dbReference>
<dbReference type="CDD" id="cd00983">
    <property type="entry name" value="RecA"/>
    <property type="match status" value="1"/>
</dbReference>
<dbReference type="FunFam" id="3.40.50.300:FF:000087">
    <property type="entry name" value="Recombinase RecA"/>
    <property type="match status" value="1"/>
</dbReference>
<dbReference type="Gene3D" id="3.40.50.300">
    <property type="entry name" value="P-loop containing nucleotide triphosphate hydrolases"/>
    <property type="match status" value="1"/>
</dbReference>
<dbReference type="HAMAP" id="MF_00268">
    <property type="entry name" value="RecA"/>
    <property type="match status" value="1"/>
</dbReference>
<dbReference type="InterPro" id="IPR003593">
    <property type="entry name" value="AAA+_ATPase"/>
</dbReference>
<dbReference type="InterPro" id="IPR013765">
    <property type="entry name" value="DNA_recomb/repair_RecA"/>
</dbReference>
<dbReference type="InterPro" id="IPR020584">
    <property type="entry name" value="DNA_recomb/repair_RecA_CS"/>
</dbReference>
<dbReference type="InterPro" id="IPR027417">
    <property type="entry name" value="P-loop_NTPase"/>
</dbReference>
<dbReference type="InterPro" id="IPR049261">
    <property type="entry name" value="RecA-like_C"/>
</dbReference>
<dbReference type="InterPro" id="IPR049428">
    <property type="entry name" value="RecA-like_N"/>
</dbReference>
<dbReference type="InterPro" id="IPR020588">
    <property type="entry name" value="RecA_ATP-bd"/>
</dbReference>
<dbReference type="InterPro" id="IPR023400">
    <property type="entry name" value="RecA_C_sf"/>
</dbReference>
<dbReference type="InterPro" id="IPR020587">
    <property type="entry name" value="RecA_monomer-monomer_interface"/>
</dbReference>
<dbReference type="NCBIfam" id="TIGR02012">
    <property type="entry name" value="tigrfam_recA"/>
    <property type="match status" value="1"/>
</dbReference>
<dbReference type="PANTHER" id="PTHR45900:SF1">
    <property type="entry name" value="MITOCHONDRIAL DNA REPAIR PROTEIN RECA HOMOLOG-RELATED"/>
    <property type="match status" value="1"/>
</dbReference>
<dbReference type="PANTHER" id="PTHR45900">
    <property type="entry name" value="RECA"/>
    <property type="match status" value="1"/>
</dbReference>
<dbReference type="Pfam" id="PF00154">
    <property type="entry name" value="RecA"/>
    <property type="match status" value="1"/>
</dbReference>
<dbReference type="Pfam" id="PF21096">
    <property type="entry name" value="RecA_C"/>
    <property type="match status" value="1"/>
</dbReference>
<dbReference type="PRINTS" id="PR00142">
    <property type="entry name" value="RECA"/>
</dbReference>
<dbReference type="SMART" id="SM00382">
    <property type="entry name" value="AAA"/>
    <property type="match status" value="1"/>
</dbReference>
<dbReference type="SUPFAM" id="SSF52540">
    <property type="entry name" value="P-loop containing nucleoside triphosphate hydrolases"/>
    <property type="match status" value="1"/>
</dbReference>
<dbReference type="SUPFAM" id="SSF54752">
    <property type="entry name" value="RecA protein, C-terminal domain"/>
    <property type="match status" value="1"/>
</dbReference>
<dbReference type="PROSITE" id="PS00321">
    <property type="entry name" value="RECA_1"/>
    <property type="match status" value="1"/>
</dbReference>
<dbReference type="PROSITE" id="PS50162">
    <property type="entry name" value="RECA_2"/>
    <property type="match status" value="1"/>
</dbReference>
<dbReference type="PROSITE" id="PS50163">
    <property type="entry name" value="RECA_3"/>
    <property type="match status" value="1"/>
</dbReference>
<sequence>MADDRKAALDAALKKIEKNYGKGSIMKLGEKIDQQVSTIPSGSLALDVALGVGGYPRGRIIEVYGPESSGKTTVALHAIAEVQKNGGTAAFIDAEHALDPQYAQKLGVNIDELLLSQPDTGEQGLEIADALVSSGAVDIVVVDSVAALVPRAEIDGEMGDSHVGLQARLMSQALRKLSGSINKTKTIAIFINQIREKVGVMFGNPEITPGGRALKFYATIRLEVRRAEQLKQGTDIVGNRTKIKVVKNKVAPPFKIAEVDVMYGQGISQEGELLDMAVEKDIVDKSGAWYSYKEDRIGQGRENAKNYMSTHPEMMAEVSALVRAAYGIGEDVEIPEETQAELPLEE</sequence>
<keyword id="KW-0067">ATP-binding</keyword>
<keyword id="KW-0963">Cytoplasm</keyword>
<keyword id="KW-0227">DNA damage</keyword>
<keyword id="KW-0233">DNA recombination</keyword>
<keyword id="KW-0234">DNA repair</keyword>
<keyword id="KW-0238">DNA-binding</keyword>
<keyword id="KW-0547">Nucleotide-binding</keyword>
<keyword id="KW-0742">SOS response</keyword>
<evidence type="ECO:0000255" key="1">
    <source>
        <dbReference type="HAMAP-Rule" id="MF_00268"/>
    </source>
</evidence>
<feature type="chain" id="PRO_0000122712" description="Protein RecA">
    <location>
        <begin position="1"/>
        <end position="346"/>
    </location>
</feature>
<feature type="binding site" evidence="1">
    <location>
        <begin position="65"/>
        <end position="72"/>
    </location>
    <ligand>
        <name>ATP</name>
        <dbReference type="ChEBI" id="CHEBI:30616"/>
    </ligand>
</feature>
<comment type="function">
    <text evidence="1">Can catalyze the hydrolysis of ATP in the presence of single-stranded DNA, the ATP-dependent uptake of single-stranded DNA by duplex DNA, and the ATP-dependent hybridization of homologous single-stranded DNAs. It interacts with LexA causing its activation and leading to its autocatalytic cleavage.</text>
</comment>
<comment type="subcellular location">
    <subcellularLocation>
        <location evidence="1">Cytoplasm</location>
    </subcellularLocation>
</comment>
<comment type="similarity">
    <text evidence="1">Belongs to the RecA family.</text>
</comment>
<name>RECA_ENTHA</name>
<organism>
    <name type="scientific">Enterococcus hirae (strain ATCC 9790 / DSM 20160 / JCM 8729 / LMG 6399 / NBRC 3181 / NCIMB 6459 / NCDO 1258 / NCTC 12367 / WDCM 00089 / R)</name>
    <dbReference type="NCBI Taxonomy" id="768486"/>
    <lineage>
        <taxon>Bacteria</taxon>
        <taxon>Bacillati</taxon>
        <taxon>Bacillota</taxon>
        <taxon>Bacilli</taxon>
        <taxon>Lactobacillales</taxon>
        <taxon>Enterococcaceae</taxon>
        <taxon>Enterococcus</taxon>
    </lineage>
</organism>
<protein>
    <recommendedName>
        <fullName evidence="1">Protein RecA</fullName>
    </recommendedName>
    <alternativeName>
        <fullName evidence="1">Recombinase A</fullName>
    </alternativeName>
</protein>
<reference key="1">
    <citation type="submission" date="2004-01" db="EMBL/GenBank/DDBJ databases">
        <title>Taxonomic re-evaluation of the genus Enterococcus.</title>
        <authorList>
            <person name="Torriani S."/>
            <person name="Felis G.E."/>
            <person name="Knijff E."/>
            <person name="Girelli D."/>
            <person name="Castioni A."/>
            <person name="Dellaglio F."/>
        </authorList>
    </citation>
    <scope>NUCLEOTIDE SEQUENCE [GENOMIC DNA]</scope>
    <source>
        <strain>ATCC 9790 / DSM 20160 / JCM 8729 / LMG 6399 / NBRC 3181 / NCIMB 6459 / NCDO 1258 / NCTC 12367 / WDCM 00089 / R</strain>
    </source>
</reference>
<reference key="2">
    <citation type="journal article" date="2012" name="J. Bacteriol.">
        <title>Genome sequence of Enterococcus hirae (Streptococcus faecalis) ATCC 9790, a model organism for the study of ion transport, bioenergetics, and copper homeostasis.</title>
        <authorList>
            <person name="Gaechter T."/>
            <person name="Wunderlin C."/>
            <person name="Schmidheini T."/>
            <person name="Solioz M."/>
        </authorList>
    </citation>
    <scope>NUCLEOTIDE SEQUENCE [LARGE SCALE GENOMIC DNA]</scope>
    <source>
        <strain>ATCC 9790 / DSM 20160 / JCM 8729 / LMG 6399 / NBRC 3181 / NCIMB 6459 / NCDO 1258 / NCTC 12367 / WDCM 00089 / R</strain>
    </source>
</reference>